<dbReference type="EC" id="2.3.1.-" evidence="5"/>
<dbReference type="EMBL" id="KL648628">
    <property type="protein sequence ID" value="KEY67215.1"/>
    <property type="molecule type" value="Genomic_DNA"/>
</dbReference>
<dbReference type="SMR" id="A0A084API6"/>
<dbReference type="HOGENOM" id="CLU_1543786_0_0_1"/>
<dbReference type="Proteomes" id="UP000028045">
    <property type="component" value="Unassembled WGS sequence"/>
</dbReference>
<dbReference type="GO" id="GO:0016407">
    <property type="term" value="F:acetyltransferase activity"/>
    <property type="evidence" value="ECO:0007669"/>
    <property type="project" value="InterPro"/>
</dbReference>
<dbReference type="GO" id="GO:0043386">
    <property type="term" value="P:mycotoxin biosynthetic process"/>
    <property type="evidence" value="ECO:0007669"/>
    <property type="project" value="InterPro"/>
</dbReference>
<dbReference type="Gene3D" id="3.30.559.30">
    <property type="entry name" value="Nonribosomal peptide synthetase, condensation domain"/>
    <property type="match status" value="1"/>
</dbReference>
<dbReference type="InterPro" id="IPR009992">
    <property type="entry name" value="Tri3/Sat12/Sat16/Mac1"/>
</dbReference>
<dbReference type="Pfam" id="PF07428">
    <property type="entry name" value="Tri3"/>
    <property type="match status" value="1"/>
</dbReference>
<comment type="function">
    <text evidence="5">Trichothecene 15-O-acetyltransferase; part of the satratoxin SC2 cluster involved in the biosynthesis of satratoxins, trichothecene mycotoxins that are associated with human food poisonings (PubMed:25015739). Satratoxins are suggested to be made by products of multiple gene clusters (SC1, SC2 and SC3) that encode 21 proteins in all, including polyketide synthases, acetyltransferases, and other enzymes expected to modify the trichothecene skeleton (PubMed:25015739). SC1 encodes 10 proteins, SAT1 to SAT10 (PubMed:25015739). The largest are SAT8, which encodes a putative polyketide synthase (PKS) with a conventional non-reducing architecture, and SAT10, a putative protein containing four ankyrin repeats and thus may be involved in protein scaffolding (PubMed:25015739). The putative short-chain reductase SAT3 may assist the PKS in some capacity (PubMed:25015739). SAT6 contains a secretory lipase domain and acts probably as a trichothecene esterase (PubMed:25015739). SAT5 encodes a putative acetyltransferase, and so, with SAT6, may affect endogenous protection from toxicity (PubMed:25015739). The probable transcription factor SAT9 may regulate the expression of the SC1 cluster (PubMed:25015739). SC2 encodes proteins SAT11 to SAT16, the largest of which encodes the putative reducing PKS SAT13 (PubMed:25015739). SAT11 is a cytochrome P450 monooxygenase, while SAT14 and SAT16 are probable acetyltransferases (PubMed:25015739). The SC2 cluster may be regulated by the transcription factor SAT15 (PubMed:25015739). SC3 is a small cluster that encodes 5 proteins, SAT17 to SAT21 (PubMed:25015739). SAT21 is a putative MFS-type transporter which may have a role in exporting secondary metabolites (PubMed:25015739). The four other proteins putatively encoded in SC3 include the taurine hydroxylase-like protein SAT17, the O-methyltransferase SAT18, the acetyltransferase SAT19, and the Cys6-type zinc finger SAT20, the latter being probably involved in regulation of SC3 expression (PubMed:25015739).</text>
</comment>
<comment type="pathway">
    <text evidence="2">Mycotoxin biosynthesis.</text>
</comment>
<comment type="miscellaneous">
    <text evidence="4">Trichothecenes are sesquiterpenoid toxins that act by inhibiting protein biosynthesis.</text>
</comment>
<comment type="similarity">
    <text evidence="4">Belongs to the trichothecene O-acetyltransferase family.</text>
</comment>
<organism>
    <name type="scientific">Stachybotrys chartarum (strain CBS 109288 / IBT 7711)</name>
    <name type="common">Toxic black mold</name>
    <name type="synonym">Stilbospora chartarum</name>
    <dbReference type="NCBI Taxonomy" id="1280523"/>
    <lineage>
        <taxon>Eukaryota</taxon>
        <taxon>Fungi</taxon>
        <taxon>Dikarya</taxon>
        <taxon>Ascomycota</taxon>
        <taxon>Pezizomycotina</taxon>
        <taxon>Sordariomycetes</taxon>
        <taxon>Hypocreomycetidae</taxon>
        <taxon>Hypocreales</taxon>
        <taxon>Stachybotryaceae</taxon>
        <taxon>Stachybotrys</taxon>
    </lineage>
</organism>
<feature type="chain" id="PRO_0000442396" description="Trichothecene 15-O-acetyltransferase SAT16">
    <location>
        <begin position="1"/>
        <end position="184"/>
    </location>
</feature>
<feature type="binding site" evidence="1">
    <location>
        <position position="154"/>
    </location>
    <ligand>
        <name>substrate</name>
    </ligand>
</feature>
<name>SAT16_STACB</name>
<keyword id="KW-0012">Acyltransferase</keyword>
<keyword id="KW-0808">Transferase</keyword>
<reference key="1">
    <citation type="journal article" date="2014" name="BMC Genomics">
        <title>Comparative genome sequencing reveals chemotype-specific gene clusters in the toxigenic black mold Stachybotrys.</title>
        <authorList>
            <person name="Semeiks J."/>
            <person name="Borek D."/>
            <person name="Otwinowski Z."/>
            <person name="Grishin N.V."/>
        </authorList>
    </citation>
    <scope>NUCLEOTIDE SEQUENCE [LARGE SCALE GENOMIC DNA]</scope>
    <scope>IDENTIFICATION</scope>
    <scope>FUNCTION</scope>
    <source>
        <strain>CBS 109288 / IBT 7711</strain>
    </source>
</reference>
<proteinExistence type="inferred from homology"/>
<protein>
    <recommendedName>
        <fullName evidence="3">Trichothecene 15-O-acetyltransferase SAT16</fullName>
        <ecNumber evidence="5">2.3.1.-</ecNumber>
    </recommendedName>
    <alternativeName>
        <fullName evidence="3">Satratoxin biosynthesis SC2 cluster protein 16</fullName>
    </alternativeName>
</protein>
<evidence type="ECO:0000250" key="1">
    <source>
        <dbReference type="UniProtKB" id="Q9C1B7"/>
    </source>
</evidence>
<evidence type="ECO:0000269" key="2">
    <source>
    </source>
</evidence>
<evidence type="ECO:0000303" key="3">
    <source>
    </source>
</evidence>
<evidence type="ECO:0000305" key="4"/>
<evidence type="ECO:0000305" key="5">
    <source>
    </source>
</evidence>
<accession>A0A084API6</accession>
<sequence length="184" mass="20608">MVELNPVTITNDNATPRGHVLKLILVESRDIIRAVKTRLCPQYTISYLAQAATVIAMLDTYSSKSELSKPDFFVALTVVNGRRYLREDLESNYLAGYVTGAPIKIEKLRSLLVSLDDSKDIIVSALEKAAKDAKRRLDMWIYDQSQLATGFRIHSFKGAMSSENPELFKKTAVPYLSSYGINEV</sequence>
<gene>
    <name evidence="3" type="primary">SAT16</name>
    <name type="ORF">S7711_09753</name>
</gene>